<accession>Q83JC4</accession>
<sequence>MSKEKFERTKPHVNVGTIGHVDHGKTTLTAAITTVLAKTYGGAARAFDQIDNAPEEKARGITINTSHVEYDTPTRHYAHVDCPGHADYVKNMITGAAQMDGAILVVAATDGPMPQTREHILLGRQVGVPYIIVFLNKCDMVDDEELLELVEMEVRELLSQYDFPGDDTPIVRGSALKALEGDAEWEAKILELAGFLDSYIPEPERAIDKPFLLPIEDVFSISGRGTVVTGRVERGIIKVGEEVEIVGIKETQKSTCTGVEMFRKLLDEGRAGENVGVLLRGIKREEIERGQVLAKPGTIKPHTKFESEVYILSKDEGGRHTPFFKGYRPQFYFRTTDVTGTIELPEGVEMVMPGDNIKMVVTLIHPIAMDDGLRFAIREGGRTVGAGVVAKVLG</sequence>
<name>EFTU_SHIFL</name>
<feature type="initiator methionine" description="Removed" evidence="1">
    <location>
        <position position="1"/>
    </location>
</feature>
<feature type="chain" id="PRO_0000091386" description="Elongation factor Tu">
    <location>
        <begin position="2"/>
        <end position="394"/>
    </location>
</feature>
<feature type="domain" description="tr-type G">
    <location>
        <begin position="10"/>
        <end position="204"/>
    </location>
</feature>
<feature type="region of interest" description="G1" evidence="1">
    <location>
        <begin position="19"/>
        <end position="26"/>
    </location>
</feature>
<feature type="region of interest" description="G2" evidence="1">
    <location>
        <begin position="60"/>
        <end position="64"/>
    </location>
</feature>
<feature type="region of interest" description="G3" evidence="1">
    <location>
        <begin position="81"/>
        <end position="84"/>
    </location>
</feature>
<feature type="region of interest" description="G4" evidence="1">
    <location>
        <begin position="136"/>
        <end position="139"/>
    </location>
</feature>
<feature type="region of interest" description="G5" evidence="1">
    <location>
        <begin position="174"/>
        <end position="176"/>
    </location>
</feature>
<feature type="binding site" evidence="2">
    <location>
        <begin position="19"/>
        <end position="26"/>
    </location>
    <ligand>
        <name>GTP</name>
        <dbReference type="ChEBI" id="CHEBI:37565"/>
    </ligand>
</feature>
<feature type="binding site" evidence="2">
    <location>
        <position position="26"/>
    </location>
    <ligand>
        <name>Mg(2+)</name>
        <dbReference type="ChEBI" id="CHEBI:18420"/>
    </ligand>
</feature>
<feature type="binding site" evidence="2">
    <location>
        <begin position="81"/>
        <end position="85"/>
    </location>
    <ligand>
        <name>GTP</name>
        <dbReference type="ChEBI" id="CHEBI:37565"/>
    </ligand>
</feature>
<feature type="binding site" evidence="2">
    <location>
        <begin position="136"/>
        <end position="139"/>
    </location>
    <ligand>
        <name>GTP</name>
        <dbReference type="ChEBI" id="CHEBI:37565"/>
    </ligand>
</feature>
<feature type="modified residue" description="N6-acetyllysine" evidence="1">
    <location>
        <position position="314"/>
    </location>
</feature>
<feature type="sequence variant" description="In tufB; in strain: 2457T.">
    <original>G</original>
    <variation>S</variation>
    <location>
        <position position="394"/>
    </location>
</feature>
<reference key="1">
    <citation type="journal article" date="2002" name="Nucleic Acids Res.">
        <title>Genome sequence of Shigella flexneri 2a: insights into pathogenicity through comparison with genomes of Escherichia coli K12 and O157.</title>
        <authorList>
            <person name="Jin Q."/>
            <person name="Yuan Z."/>
            <person name="Xu J."/>
            <person name="Wang Y."/>
            <person name="Shen Y."/>
            <person name="Lu W."/>
            <person name="Wang J."/>
            <person name="Liu H."/>
            <person name="Yang J."/>
            <person name="Yang F."/>
            <person name="Zhang X."/>
            <person name="Zhang J."/>
            <person name="Yang G."/>
            <person name="Wu H."/>
            <person name="Qu D."/>
            <person name="Dong J."/>
            <person name="Sun L."/>
            <person name="Xue Y."/>
            <person name="Zhao A."/>
            <person name="Gao Y."/>
            <person name="Zhu J."/>
            <person name="Kan B."/>
            <person name="Ding K."/>
            <person name="Chen S."/>
            <person name="Cheng H."/>
            <person name="Yao Z."/>
            <person name="He B."/>
            <person name="Chen R."/>
            <person name="Ma D."/>
            <person name="Qiang B."/>
            <person name="Wen Y."/>
            <person name="Hou Y."/>
            <person name="Yu J."/>
        </authorList>
    </citation>
    <scope>NUCLEOTIDE SEQUENCE [LARGE SCALE GENOMIC DNA] (TUFA AND TUFB)</scope>
    <source>
        <strain>301 / Serotype 2a</strain>
    </source>
</reference>
<reference key="2">
    <citation type="journal article" date="2003" name="Infect. Immun.">
        <title>Complete genome sequence and comparative genomics of Shigella flexneri serotype 2a strain 2457T.</title>
        <authorList>
            <person name="Wei J."/>
            <person name="Goldberg M.B."/>
            <person name="Burland V."/>
            <person name="Venkatesan M.M."/>
            <person name="Deng W."/>
            <person name="Fournier G."/>
            <person name="Mayhew G.F."/>
            <person name="Plunkett G. III"/>
            <person name="Rose D.J."/>
            <person name="Darling A."/>
            <person name="Mau B."/>
            <person name="Perna N.T."/>
            <person name="Payne S.M."/>
            <person name="Runyen-Janecky L.J."/>
            <person name="Zhou S."/>
            <person name="Schwartz D.C."/>
            <person name="Blattner F.R."/>
        </authorList>
    </citation>
    <scope>NUCLEOTIDE SEQUENCE [LARGE SCALE GENOMIC DNA] (TUFA AND TUFB)</scope>
    <source>
        <strain>ATCC 700930 / 2457T / Serotype 2a</strain>
    </source>
</reference>
<organism>
    <name type="scientific">Shigella flexneri</name>
    <dbReference type="NCBI Taxonomy" id="623"/>
    <lineage>
        <taxon>Bacteria</taxon>
        <taxon>Pseudomonadati</taxon>
        <taxon>Pseudomonadota</taxon>
        <taxon>Gammaproteobacteria</taxon>
        <taxon>Enterobacterales</taxon>
        <taxon>Enterobacteriaceae</taxon>
        <taxon>Shigella</taxon>
    </lineage>
</organism>
<evidence type="ECO:0000250" key="1"/>
<evidence type="ECO:0000255" key="2">
    <source>
        <dbReference type="HAMAP-Rule" id="MF_00118"/>
    </source>
</evidence>
<protein>
    <recommendedName>
        <fullName evidence="2">Elongation factor Tu</fullName>
        <shortName evidence="2">EF-Tu</shortName>
        <ecNumber evidence="2">3.6.5.3</ecNumber>
    </recommendedName>
</protein>
<keyword id="KW-0007">Acetylation</keyword>
<keyword id="KW-0963">Cytoplasm</keyword>
<keyword id="KW-0251">Elongation factor</keyword>
<keyword id="KW-0342">GTP-binding</keyword>
<keyword id="KW-0378">Hydrolase</keyword>
<keyword id="KW-0460">Magnesium</keyword>
<keyword id="KW-0479">Metal-binding</keyword>
<keyword id="KW-0547">Nucleotide-binding</keyword>
<keyword id="KW-0648">Protein biosynthesis</keyword>
<keyword id="KW-1185">Reference proteome</keyword>
<dbReference type="EC" id="3.6.5.3" evidence="2"/>
<dbReference type="EMBL" id="AE005674">
    <property type="protein sequence ID" value="AAN44820.2"/>
    <property type="molecule type" value="Genomic_DNA"/>
</dbReference>
<dbReference type="EMBL" id="AE005674">
    <property type="protein sequence ID" value="AAN45482.1"/>
    <property type="molecule type" value="Genomic_DNA"/>
</dbReference>
<dbReference type="EMBL" id="AE014073">
    <property type="protein sequence ID" value="AAP19357.1"/>
    <property type="molecule type" value="Genomic_DNA"/>
</dbReference>
<dbReference type="EMBL" id="AE014073">
    <property type="protein sequence ID" value="AAP18719.1"/>
    <property type="molecule type" value="Genomic_DNA"/>
</dbReference>
<dbReference type="SMR" id="Q83JC4"/>
<dbReference type="STRING" id="198214.SF3357"/>
<dbReference type="DrugBank" id="DB02975">
    <property type="generic name" value="GE-2270A"/>
</dbReference>
<dbReference type="DrugBank" id="DB04315">
    <property type="generic name" value="Guanosine-5'-Diphosphate"/>
</dbReference>
<dbReference type="PaxDb" id="198214-SF3357"/>
<dbReference type="KEGG" id="sfl:SF3357"/>
<dbReference type="KEGG" id="sfl:SF4053"/>
<dbReference type="KEGG" id="sfx:S3682"/>
<dbReference type="KEGG" id="sfx:S4405"/>
<dbReference type="PATRIC" id="fig|198214.7.peg.3966"/>
<dbReference type="HOGENOM" id="CLU_007265_0_2_6"/>
<dbReference type="Proteomes" id="UP000001006">
    <property type="component" value="Chromosome"/>
</dbReference>
<dbReference type="Proteomes" id="UP000002673">
    <property type="component" value="Chromosome"/>
</dbReference>
<dbReference type="GO" id="GO:0005829">
    <property type="term" value="C:cytosol"/>
    <property type="evidence" value="ECO:0007669"/>
    <property type="project" value="TreeGrafter"/>
</dbReference>
<dbReference type="GO" id="GO:0005525">
    <property type="term" value="F:GTP binding"/>
    <property type="evidence" value="ECO:0007669"/>
    <property type="project" value="UniProtKB-UniRule"/>
</dbReference>
<dbReference type="GO" id="GO:0003924">
    <property type="term" value="F:GTPase activity"/>
    <property type="evidence" value="ECO:0007669"/>
    <property type="project" value="InterPro"/>
</dbReference>
<dbReference type="GO" id="GO:0097216">
    <property type="term" value="F:guanosine tetraphosphate binding"/>
    <property type="evidence" value="ECO:0007669"/>
    <property type="project" value="UniProtKB-ARBA"/>
</dbReference>
<dbReference type="GO" id="GO:0003746">
    <property type="term" value="F:translation elongation factor activity"/>
    <property type="evidence" value="ECO:0007669"/>
    <property type="project" value="UniProtKB-UniRule"/>
</dbReference>
<dbReference type="CDD" id="cd01884">
    <property type="entry name" value="EF_Tu"/>
    <property type="match status" value="1"/>
</dbReference>
<dbReference type="CDD" id="cd03697">
    <property type="entry name" value="EFTU_II"/>
    <property type="match status" value="1"/>
</dbReference>
<dbReference type="CDD" id="cd03707">
    <property type="entry name" value="EFTU_III"/>
    <property type="match status" value="1"/>
</dbReference>
<dbReference type="FunFam" id="2.40.30.10:FF:000001">
    <property type="entry name" value="Elongation factor Tu"/>
    <property type="match status" value="1"/>
</dbReference>
<dbReference type="FunFam" id="3.40.50.300:FF:000003">
    <property type="entry name" value="Elongation factor Tu"/>
    <property type="match status" value="1"/>
</dbReference>
<dbReference type="Gene3D" id="3.40.50.300">
    <property type="entry name" value="P-loop containing nucleotide triphosphate hydrolases"/>
    <property type="match status" value="1"/>
</dbReference>
<dbReference type="Gene3D" id="2.40.30.10">
    <property type="entry name" value="Translation factors"/>
    <property type="match status" value="2"/>
</dbReference>
<dbReference type="HAMAP" id="MF_00118_B">
    <property type="entry name" value="EF_Tu_B"/>
    <property type="match status" value="1"/>
</dbReference>
<dbReference type="InterPro" id="IPR041709">
    <property type="entry name" value="EF-Tu_GTP-bd"/>
</dbReference>
<dbReference type="InterPro" id="IPR050055">
    <property type="entry name" value="EF-Tu_GTPase"/>
</dbReference>
<dbReference type="InterPro" id="IPR004161">
    <property type="entry name" value="EFTu-like_2"/>
</dbReference>
<dbReference type="InterPro" id="IPR033720">
    <property type="entry name" value="EFTU_2"/>
</dbReference>
<dbReference type="InterPro" id="IPR031157">
    <property type="entry name" value="G_TR_CS"/>
</dbReference>
<dbReference type="InterPro" id="IPR027417">
    <property type="entry name" value="P-loop_NTPase"/>
</dbReference>
<dbReference type="InterPro" id="IPR005225">
    <property type="entry name" value="Small_GTP-bd"/>
</dbReference>
<dbReference type="InterPro" id="IPR000795">
    <property type="entry name" value="T_Tr_GTP-bd_dom"/>
</dbReference>
<dbReference type="InterPro" id="IPR009000">
    <property type="entry name" value="Transl_B-barrel_sf"/>
</dbReference>
<dbReference type="InterPro" id="IPR009001">
    <property type="entry name" value="Transl_elong_EF1A/Init_IF2_C"/>
</dbReference>
<dbReference type="InterPro" id="IPR004541">
    <property type="entry name" value="Transl_elong_EFTu/EF1A_bac/org"/>
</dbReference>
<dbReference type="InterPro" id="IPR004160">
    <property type="entry name" value="Transl_elong_EFTu/EF1A_C"/>
</dbReference>
<dbReference type="NCBIfam" id="TIGR00485">
    <property type="entry name" value="EF-Tu"/>
    <property type="match status" value="1"/>
</dbReference>
<dbReference type="NCBIfam" id="NF000766">
    <property type="entry name" value="PRK00049.1"/>
    <property type="match status" value="1"/>
</dbReference>
<dbReference type="NCBIfam" id="NF009372">
    <property type="entry name" value="PRK12735.1"/>
    <property type="match status" value="1"/>
</dbReference>
<dbReference type="NCBIfam" id="NF009373">
    <property type="entry name" value="PRK12736.1"/>
    <property type="match status" value="1"/>
</dbReference>
<dbReference type="NCBIfam" id="TIGR00231">
    <property type="entry name" value="small_GTP"/>
    <property type="match status" value="1"/>
</dbReference>
<dbReference type="PANTHER" id="PTHR43721:SF22">
    <property type="entry name" value="ELONGATION FACTOR TU, MITOCHONDRIAL"/>
    <property type="match status" value="1"/>
</dbReference>
<dbReference type="PANTHER" id="PTHR43721">
    <property type="entry name" value="ELONGATION FACTOR TU-RELATED"/>
    <property type="match status" value="1"/>
</dbReference>
<dbReference type="Pfam" id="PF00009">
    <property type="entry name" value="GTP_EFTU"/>
    <property type="match status" value="1"/>
</dbReference>
<dbReference type="Pfam" id="PF03144">
    <property type="entry name" value="GTP_EFTU_D2"/>
    <property type="match status" value="1"/>
</dbReference>
<dbReference type="Pfam" id="PF03143">
    <property type="entry name" value="GTP_EFTU_D3"/>
    <property type="match status" value="1"/>
</dbReference>
<dbReference type="PRINTS" id="PR00315">
    <property type="entry name" value="ELONGATNFCT"/>
</dbReference>
<dbReference type="SUPFAM" id="SSF50465">
    <property type="entry name" value="EF-Tu/eEF-1alpha/eIF2-gamma C-terminal domain"/>
    <property type="match status" value="1"/>
</dbReference>
<dbReference type="SUPFAM" id="SSF52540">
    <property type="entry name" value="P-loop containing nucleoside triphosphate hydrolases"/>
    <property type="match status" value="1"/>
</dbReference>
<dbReference type="SUPFAM" id="SSF50447">
    <property type="entry name" value="Translation proteins"/>
    <property type="match status" value="1"/>
</dbReference>
<dbReference type="PROSITE" id="PS00301">
    <property type="entry name" value="G_TR_1"/>
    <property type="match status" value="1"/>
</dbReference>
<dbReference type="PROSITE" id="PS51722">
    <property type="entry name" value="G_TR_2"/>
    <property type="match status" value="1"/>
</dbReference>
<proteinExistence type="inferred from homology"/>
<comment type="function">
    <text evidence="2">GTP hydrolase that promotes the GTP-dependent binding of aminoacyl-tRNA to the A-site of ribosomes during protein biosynthesis.</text>
</comment>
<comment type="catalytic activity">
    <reaction evidence="2">
        <text>GTP + H2O = GDP + phosphate + H(+)</text>
        <dbReference type="Rhea" id="RHEA:19669"/>
        <dbReference type="ChEBI" id="CHEBI:15377"/>
        <dbReference type="ChEBI" id="CHEBI:15378"/>
        <dbReference type="ChEBI" id="CHEBI:37565"/>
        <dbReference type="ChEBI" id="CHEBI:43474"/>
        <dbReference type="ChEBI" id="CHEBI:58189"/>
        <dbReference type="EC" id="3.6.5.3"/>
    </reaction>
    <physiologicalReaction direction="left-to-right" evidence="2">
        <dbReference type="Rhea" id="RHEA:19670"/>
    </physiologicalReaction>
</comment>
<comment type="subunit">
    <text evidence="2">Monomer.</text>
</comment>
<comment type="subcellular location">
    <subcellularLocation>
        <location evidence="2">Cytoplasm</location>
    </subcellularLocation>
</comment>
<comment type="similarity">
    <text evidence="2">Belongs to the TRAFAC class translation factor GTPase superfamily. Classic translation factor GTPase family. EF-Tu/EF-1A subfamily.</text>
</comment>
<gene>
    <name evidence="2" type="primary">tufA</name>
    <name type="ordered locus">SF3357</name>
    <name type="ordered locus">S4405</name>
</gene>
<gene>
    <name evidence="2" type="primary">tufB</name>
    <name type="ordered locus">SF4053</name>
    <name type="ordered locus">S3682</name>
</gene>